<protein>
    <recommendedName>
        <fullName evidence="2">5-formaminoimidazole-4-carboxamide-1-(beta)-D-ribofuranosyl 5'-monophosphate synthetase</fullName>
        <ecNumber evidence="2">6.3.4.23</ecNumber>
    </recommendedName>
    <alternativeName>
        <fullName evidence="2">5-aminoimidazole-4-carboxamide-1-beta-D-ribofuranosyl 5'-monophosphate--formate ligase</fullName>
    </alternativeName>
</protein>
<organism>
    <name type="scientific">Pyrococcus furiosus (strain ATCC 43587 / DSM 3638 / JCM 8422 / Vc1)</name>
    <dbReference type="NCBI Taxonomy" id="186497"/>
    <lineage>
        <taxon>Archaea</taxon>
        <taxon>Methanobacteriati</taxon>
        <taxon>Methanobacteriota</taxon>
        <taxon>Thermococci</taxon>
        <taxon>Thermococcales</taxon>
        <taxon>Thermococcaceae</taxon>
        <taxon>Pyrococcus</taxon>
    </lineage>
</organism>
<keyword id="KW-0002">3D-structure</keyword>
<keyword id="KW-0067">ATP-binding</keyword>
<keyword id="KW-0436">Ligase</keyword>
<keyword id="KW-0460">Magnesium</keyword>
<keyword id="KW-0464">Manganese</keyword>
<keyword id="KW-0479">Metal-binding</keyword>
<keyword id="KW-0547">Nucleotide-binding</keyword>
<keyword id="KW-0658">Purine biosynthesis</keyword>
<keyword id="KW-1185">Reference proteome</keyword>
<gene>
    <name evidence="2" type="primary">purP</name>
    <name type="ordered locus">PF1517</name>
</gene>
<accession>Q8U0R7</accession>
<feature type="chain" id="PRO_0000348636" description="5-formaminoimidazole-4-carboxamide-1-(beta)-D-ribofuranosyl 5'-monophosphate synthetase">
    <location>
        <begin position="1"/>
        <end position="334"/>
    </location>
</feature>
<feature type="domain" description="ATP-grasp" evidence="2">
    <location>
        <begin position="78"/>
        <end position="325"/>
    </location>
</feature>
<feature type="binding site">
    <location>
        <position position="10"/>
    </location>
    <ligand>
        <name>5-amino-1-(5-phospho-beta-D-ribosyl)imidazole-4-carboxamide</name>
        <dbReference type="ChEBI" id="CHEBI:58475"/>
    </ligand>
</feature>
<feature type="binding site">
    <location>
        <position position="11"/>
    </location>
    <ligand>
        <name>5-amino-1-(5-phospho-beta-D-ribosyl)imidazole-4-carboxamide</name>
        <dbReference type="ChEBI" id="CHEBI:58475"/>
    </ligand>
</feature>
<feature type="binding site">
    <location>
        <position position="71"/>
    </location>
    <ligand>
        <name>5-amino-1-(5-phospho-beta-D-ribosyl)imidazole-4-carboxamide</name>
        <dbReference type="ChEBI" id="CHEBI:58475"/>
    </ligand>
</feature>
<feature type="binding site">
    <location>
        <position position="75"/>
    </location>
    <ligand>
        <name>5-amino-1-(5-phospho-beta-D-ribosyl)imidazole-4-carboxamide</name>
        <dbReference type="ChEBI" id="CHEBI:58475"/>
    </ligand>
</feature>
<feature type="binding site">
    <location>
        <begin position="132"/>
        <end position="142"/>
    </location>
    <ligand>
        <name>ATP</name>
        <dbReference type="ChEBI" id="CHEBI:30616"/>
    </ligand>
</feature>
<feature type="binding site">
    <location>
        <begin position="173"/>
        <end position="176"/>
    </location>
    <ligand>
        <name>ATP</name>
        <dbReference type="ChEBI" id="CHEBI:30616"/>
    </ligand>
</feature>
<feature type="binding site">
    <location>
        <position position="204"/>
    </location>
    <ligand>
        <name>ATP</name>
        <dbReference type="ChEBI" id="CHEBI:30616"/>
    </ligand>
</feature>
<feature type="binding site">
    <location>
        <position position="232"/>
    </location>
    <ligand>
        <name>5-amino-1-(5-phospho-beta-D-ribosyl)imidazole-4-carboxamide</name>
        <dbReference type="ChEBI" id="CHEBI:58475"/>
    </ligand>
</feature>
<feature type="binding site" evidence="2">
    <location>
        <position position="270"/>
    </location>
    <ligand>
        <name>Mg(2+)</name>
        <dbReference type="ChEBI" id="CHEBI:18420"/>
    </ligand>
</feature>
<feature type="binding site" evidence="2">
    <location>
        <position position="283"/>
    </location>
    <ligand>
        <name>Mg(2+)</name>
        <dbReference type="ChEBI" id="CHEBI:18420"/>
    </ligand>
</feature>
<feature type="strand" evidence="4">
    <location>
        <begin position="3"/>
        <end position="10"/>
    </location>
</feature>
<feature type="helix" evidence="4">
    <location>
        <begin position="13"/>
        <end position="22"/>
    </location>
</feature>
<feature type="strand" evidence="4">
    <location>
        <begin position="27"/>
        <end position="31"/>
    </location>
</feature>
<feature type="helix" evidence="4">
    <location>
        <begin position="33"/>
        <end position="35"/>
    </location>
</feature>
<feature type="helix" evidence="4">
    <location>
        <begin position="36"/>
        <end position="40"/>
    </location>
</feature>
<feature type="strand" evidence="4">
    <location>
        <begin position="47"/>
        <end position="50"/>
    </location>
</feature>
<feature type="helix" evidence="4">
    <location>
        <begin position="56"/>
        <end position="61"/>
    </location>
</feature>
<feature type="strand" evidence="4">
    <location>
        <begin position="64"/>
        <end position="66"/>
    </location>
</feature>
<feature type="helix" evidence="4">
    <location>
        <begin position="72"/>
        <end position="76"/>
    </location>
</feature>
<feature type="helix" evidence="4">
    <location>
        <begin position="78"/>
        <end position="82"/>
    </location>
</feature>
<feature type="strand" evidence="4">
    <location>
        <begin position="88"/>
        <end position="90"/>
    </location>
</feature>
<feature type="helix" evidence="4">
    <location>
        <begin position="94"/>
        <end position="99"/>
    </location>
</feature>
<feature type="helix" evidence="4">
    <location>
        <begin position="101"/>
        <end position="110"/>
    </location>
</feature>
<feature type="strand" evidence="5">
    <location>
        <begin position="118"/>
        <end position="121"/>
    </location>
</feature>
<feature type="helix" evidence="4">
    <location>
        <begin position="122"/>
        <end position="124"/>
    </location>
</feature>
<feature type="strand" evidence="4">
    <location>
        <begin position="129"/>
        <end position="133"/>
    </location>
</feature>
<feature type="turn" evidence="5">
    <location>
        <begin position="138"/>
        <end position="141"/>
    </location>
</feature>
<feature type="strand" evidence="4">
    <location>
        <begin position="143"/>
        <end position="147"/>
    </location>
</feature>
<feature type="helix" evidence="4">
    <location>
        <begin position="148"/>
        <end position="159"/>
    </location>
</feature>
<feature type="helix" evidence="4">
    <location>
        <begin position="164"/>
        <end position="166"/>
    </location>
</feature>
<feature type="strand" evidence="4">
    <location>
        <begin position="169"/>
        <end position="174"/>
    </location>
</feature>
<feature type="strand" evidence="4">
    <location>
        <begin position="179"/>
        <end position="188"/>
    </location>
</feature>
<feature type="turn" evidence="4">
    <location>
        <begin position="189"/>
        <end position="192"/>
    </location>
</feature>
<feature type="strand" evidence="4">
    <location>
        <begin position="193"/>
        <end position="206"/>
    </location>
</feature>
<feature type="helix" evidence="4">
    <location>
        <begin position="207"/>
        <end position="212"/>
    </location>
</feature>
<feature type="helix" evidence="4">
    <location>
        <begin position="215"/>
        <end position="218"/>
    </location>
</feature>
<feature type="strand" evidence="4">
    <location>
        <begin position="227"/>
        <end position="234"/>
    </location>
</feature>
<feature type="helix" evidence="4">
    <location>
        <begin position="239"/>
        <end position="241"/>
    </location>
</feature>
<feature type="helix" evidence="4">
    <location>
        <begin position="242"/>
        <end position="259"/>
    </location>
</feature>
<feature type="strand" evidence="4">
    <location>
        <begin position="265"/>
        <end position="273"/>
    </location>
</feature>
<feature type="strand" evidence="4">
    <location>
        <begin position="279"/>
        <end position="285"/>
    </location>
</feature>
<feature type="helix" evidence="4">
    <location>
        <begin position="290"/>
        <end position="295"/>
    </location>
</feature>
<feature type="helix" evidence="4">
    <location>
        <begin position="302"/>
        <end position="304"/>
    </location>
</feature>
<feature type="helix" evidence="4">
    <location>
        <begin position="312"/>
        <end position="325"/>
    </location>
</feature>
<feature type="helix" evidence="4">
    <location>
        <begin position="329"/>
        <end position="332"/>
    </location>
</feature>
<evidence type="ECO:0000250" key="1"/>
<evidence type="ECO:0000255" key="2">
    <source>
        <dbReference type="HAMAP-Rule" id="MF_01163"/>
    </source>
</evidence>
<evidence type="ECO:0000269" key="3">
    <source>
    </source>
</evidence>
<evidence type="ECO:0007829" key="4">
    <source>
        <dbReference type="PDB" id="2R85"/>
    </source>
</evidence>
<evidence type="ECO:0007829" key="5">
    <source>
        <dbReference type="PDB" id="2R87"/>
    </source>
</evidence>
<proteinExistence type="evidence at protein level"/>
<name>PURP_PYRFU</name>
<reference key="1">
    <citation type="journal article" date="1999" name="Genetics">
        <title>Divergence of the hyperthermophilic archaea Pyrococcus furiosus and P. horikoshii inferred from complete genomic sequences.</title>
        <authorList>
            <person name="Maeder D.L."/>
            <person name="Weiss R.B."/>
            <person name="Dunn D.M."/>
            <person name="Cherry J.L."/>
            <person name="Gonzalez J.M."/>
            <person name="DiRuggiero J."/>
            <person name="Robb F.T."/>
        </authorList>
    </citation>
    <scope>NUCLEOTIDE SEQUENCE [LARGE SCALE GENOMIC DNA]</scope>
    <source>
        <strain>ATCC 43587 / DSM 3638 / JCM 8422 / Vc1</strain>
    </source>
</reference>
<reference key="2">
    <citation type="journal article" date="2008" name="Biochemistry">
        <title>Crystal structure and function of 5-formaminoimidazole-4-carboxamide ribonucleotide synthetase from Methanocaldococcus jannaschii.</title>
        <authorList>
            <person name="Zhang Y."/>
            <person name="White R.H."/>
            <person name="Ealick S.E."/>
        </authorList>
    </citation>
    <scope>X-RAY CRYSTALLOGRAPHY (1.7 ANGSTROMS) IN COMPLEXES WITH ATP AND SUBSTRATE AICAR</scope>
    <scope>SUBUNIT</scope>
</reference>
<sequence length="334" mass="38298">MKVRIATYASHSALQILKGAKDEGFETIAFGSSKVKPLYTKYFPVADYFIEEKYPEEELLNLNAVVVPTGSFVAHLGIELVENMKVPYFGNKRVLRWESDRNLERKWLKKAGIRVPEVYEDPDDIEKPVIVKPHGAKGGKGYFLAKDPEDFWRKAEKFLGIKRKEDLKNIQIQEYVLGVPVYPHYFYSKVREELELMSIDRRYESNVDAIGRIPAKDQLEFDMDITYTVIGNIPIVLRESLLMDVIEAGERVVKAAEELMGGLWGPFCLEGVFTPDLEFVVFEISARIVAGTNIFVNGSPYTWLRYDRPVSTGRRIAMEIREAIENDMLEKVLT</sequence>
<comment type="function">
    <text evidence="2">Catalyzes the ATP- and formate-dependent formylation of 5-aminoimidazole-4-carboxamide-1-beta-d-ribofuranosyl 5'-monophosphate (AICAR) to 5-formaminoimidazole-4-carboxamide-1-beta-d-ribofuranosyl 5'-monophosphate (FAICAR) in the absence of folates.</text>
</comment>
<comment type="catalytic activity">
    <reaction evidence="2">
        <text>5-amino-1-(5-phospho-beta-D-ribosyl)imidazole-4-carboxamide + formate + ATP = 5-formamido-1-(5-phospho-D-ribosyl)imidazole-4-carboxamide + ADP + phosphate</text>
        <dbReference type="Rhea" id="RHEA:24836"/>
        <dbReference type="ChEBI" id="CHEBI:15740"/>
        <dbReference type="ChEBI" id="CHEBI:30616"/>
        <dbReference type="ChEBI" id="CHEBI:43474"/>
        <dbReference type="ChEBI" id="CHEBI:58467"/>
        <dbReference type="ChEBI" id="CHEBI:58475"/>
        <dbReference type="ChEBI" id="CHEBI:456216"/>
        <dbReference type="EC" id="6.3.4.23"/>
    </reaction>
</comment>
<comment type="cofactor">
    <cofactor evidence="1">
        <name>Mg(2+)</name>
        <dbReference type="ChEBI" id="CHEBI:18420"/>
    </cofactor>
    <cofactor evidence="1">
        <name>Mn(2+)</name>
        <dbReference type="ChEBI" id="CHEBI:29035"/>
    </cofactor>
    <text evidence="1">Binds 1 Mg(2+) or Mn(2+) ion per subunit.</text>
</comment>
<comment type="pathway">
    <text evidence="2">Purine metabolism; IMP biosynthesis via de novo pathway; 5-formamido-1-(5-phospho-D-ribosyl)imidazole-4-carboxamide from 5-amino-1-(5-phospho-D-ribosyl)imidazole-4-carboxamide (formate route): step 1/1.</text>
</comment>
<comment type="subunit">
    <text evidence="3">Homotrimer and homohexamer.</text>
</comment>
<comment type="similarity">
    <text evidence="2">Belongs to the phosphohexose mutase family.</text>
</comment>
<dbReference type="EC" id="6.3.4.23" evidence="2"/>
<dbReference type="EMBL" id="AE009950">
    <property type="protein sequence ID" value="AAL81641.1"/>
    <property type="molecule type" value="Genomic_DNA"/>
</dbReference>
<dbReference type="RefSeq" id="WP_011012664.1">
    <property type="nucleotide sequence ID" value="NZ_CP023154.1"/>
</dbReference>
<dbReference type="PDB" id="2R84">
    <property type="method" value="X-ray"/>
    <property type="resolution" value="1.90 A"/>
    <property type="chains" value="A/B=1-334"/>
</dbReference>
<dbReference type="PDB" id="2R85">
    <property type="method" value="X-ray"/>
    <property type="resolution" value="1.70 A"/>
    <property type="chains" value="A/B=1-334"/>
</dbReference>
<dbReference type="PDB" id="2R86">
    <property type="method" value="X-ray"/>
    <property type="resolution" value="2.50 A"/>
    <property type="chains" value="A/B=1-334"/>
</dbReference>
<dbReference type="PDB" id="2R87">
    <property type="method" value="X-ray"/>
    <property type="resolution" value="2.30 A"/>
    <property type="chains" value="A/B/C/D/E/F=1-334"/>
</dbReference>
<dbReference type="PDBsum" id="2R84"/>
<dbReference type="PDBsum" id="2R85"/>
<dbReference type="PDBsum" id="2R86"/>
<dbReference type="PDBsum" id="2R87"/>
<dbReference type="SMR" id="Q8U0R7"/>
<dbReference type="STRING" id="186497.PF1517"/>
<dbReference type="PaxDb" id="186497-PF1517"/>
<dbReference type="KEGG" id="pfu:PF1517"/>
<dbReference type="PATRIC" id="fig|186497.12.peg.1580"/>
<dbReference type="eggNOG" id="arCOG04346">
    <property type="taxonomic scope" value="Archaea"/>
</dbReference>
<dbReference type="HOGENOM" id="CLU_065084_0_0_2"/>
<dbReference type="OrthoDB" id="98133at2157"/>
<dbReference type="PhylomeDB" id="Q8U0R7"/>
<dbReference type="UniPathway" id="UPA00074">
    <property type="reaction ID" value="UER00134"/>
</dbReference>
<dbReference type="EvolutionaryTrace" id="Q8U0R7"/>
<dbReference type="Proteomes" id="UP000001013">
    <property type="component" value="Chromosome"/>
</dbReference>
<dbReference type="GO" id="GO:0005524">
    <property type="term" value="F:ATP binding"/>
    <property type="evidence" value="ECO:0007669"/>
    <property type="project" value="UniProtKB-KW"/>
</dbReference>
<dbReference type="GO" id="GO:0016879">
    <property type="term" value="F:ligase activity, forming carbon-nitrogen bonds"/>
    <property type="evidence" value="ECO:0007669"/>
    <property type="project" value="UniProtKB-UniRule"/>
</dbReference>
<dbReference type="GO" id="GO:0000287">
    <property type="term" value="F:magnesium ion binding"/>
    <property type="evidence" value="ECO:0007669"/>
    <property type="project" value="InterPro"/>
</dbReference>
<dbReference type="GO" id="GO:0006189">
    <property type="term" value="P:'de novo' IMP biosynthetic process"/>
    <property type="evidence" value="ECO:0007669"/>
    <property type="project" value="UniProtKB-UniRule"/>
</dbReference>
<dbReference type="Gene3D" id="3.40.50.20">
    <property type="match status" value="1"/>
</dbReference>
<dbReference type="Gene3D" id="3.30.1490.20">
    <property type="entry name" value="ATP-grasp fold, A domain"/>
    <property type="match status" value="1"/>
</dbReference>
<dbReference type="Gene3D" id="3.30.470.20">
    <property type="entry name" value="ATP-grasp fold, B domain"/>
    <property type="match status" value="1"/>
</dbReference>
<dbReference type="HAMAP" id="MF_01163">
    <property type="entry name" value="IMP_biosynth_PurP"/>
    <property type="match status" value="1"/>
</dbReference>
<dbReference type="InterPro" id="IPR011761">
    <property type="entry name" value="ATP-grasp"/>
</dbReference>
<dbReference type="InterPro" id="IPR013815">
    <property type="entry name" value="ATP_grasp_subdomain_1"/>
</dbReference>
<dbReference type="InterPro" id="IPR023656">
    <property type="entry name" value="IMP_biosynth_PurP"/>
</dbReference>
<dbReference type="InterPro" id="IPR009720">
    <property type="entry name" value="IMP_biosynth_PurP_C"/>
</dbReference>
<dbReference type="InterPro" id="IPR010672">
    <property type="entry name" value="IMP_biosynth_PurP_N"/>
</dbReference>
<dbReference type="InterPro" id="IPR016185">
    <property type="entry name" value="PreATP-grasp_dom_sf"/>
</dbReference>
<dbReference type="NCBIfam" id="NF009779">
    <property type="entry name" value="PRK13278.1-3"/>
    <property type="match status" value="1"/>
</dbReference>
<dbReference type="PANTHER" id="PTHR38147:SF2">
    <property type="entry name" value="5-FORMAMINOIMIDAZOLE-4-CARBOXAMIDE-1-(BETA)-D-RIBOFURANOSYL 5'-MONOPHOSPHATE SYNTHETASE"/>
    <property type="match status" value="1"/>
</dbReference>
<dbReference type="PANTHER" id="PTHR38147">
    <property type="entry name" value="5-FORMAMINOIMIDAZOLE-4-CARBOXAMIDE-1-(BETA)-D-RIBOFURANOSYL 5'-MONOPHOSPHATE SYNTHETASE-RELATED"/>
    <property type="match status" value="1"/>
</dbReference>
<dbReference type="Pfam" id="PF06849">
    <property type="entry name" value="DUF1246"/>
    <property type="match status" value="1"/>
</dbReference>
<dbReference type="Pfam" id="PF06973">
    <property type="entry name" value="DUF1297"/>
    <property type="match status" value="1"/>
</dbReference>
<dbReference type="PIRSF" id="PIRSF004602">
    <property type="entry name" value="ATPgrasp_PurP"/>
    <property type="match status" value="1"/>
</dbReference>
<dbReference type="SUPFAM" id="SSF56059">
    <property type="entry name" value="Glutathione synthetase ATP-binding domain-like"/>
    <property type="match status" value="1"/>
</dbReference>
<dbReference type="SUPFAM" id="SSF52440">
    <property type="entry name" value="PreATP-grasp domain"/>
    <property type="match status" value="1"/>
</dbReference>
<dbReference type="PROSITE" id="PS50975">
    <property type="entry name" value="ATP_GRASP"/>
    <property type="match status" value="1"/>
</dbReference>